<organism>
    <name type="scientific">Streptococcus suis (strain 05ZYH33)</name>
    <dbReference type="NCBI Taxonomy" id="391295"/>
    <lineage>
        <taxon>Bacteria</taxon>
        <taxon>Bacillati</taxon>
        <taxon>Bacillota</taxon>
        <taxon>Bacilli</taxon>
        <taxon>Lactobacillales</taxon>
        <taxon>Streptococcaceae</taxon>
        <taxon>Streptococcus</taxon>
    </lineage>
</organism>
<feature type="chain" id="PRO_1000054882" description="Small ribosomal subunit protein uS15">
    <location>
        <begin position="1"/>
        <end position="89"/>
    </location>
</feature>
<sequence length="89" mass="10577">MAISKEKKNEIMAQYARHEGDTGSVEVQVAVLTWEINHLNDHIKQHKKDHATYRGLMKKIGRRRNLLAYLRRTDVNRYRELIHSLGLRR</sequence>
<comment type="function">
    <text evidence="1">One of the primary rRNA binding proteins, it binds directly to 16S rRNA where it helps nucleate assembly of the platform of the 30S subunit by binding and bridging several RNA helices of the 16S rRNA.</text>
</comment>
<comment type="function">
    <text evidence="1">Forms an intersubunit bridge (bridge B4) with the 23S rRNA of the 50S subunit in the ribosome.</text>
</comment>
<comment type="subunit">
    <text evidence="1">Part of the 30S ribosomal subunit. Forms a bridge to the 50S subunit in the 70S ribosome, contacting the 23S rRNA.</text>
</comment>
<comment type="similarity">
    <text evidence="1">Belongs to the universal ribosomal protein uS15 family.</text>
</comment>
<reference key="1">
    <citation type="journal article" date="2007" name="PLoS ONE">
        <title>A glimpse of streptococcal toxic shock syndrome from comparative genomics of S. suis 2 Chinese isolates.</title>
        <authorList>
            <person name="Chen C."/>
            <person name="Tang J."/>
            <person name="Dong W."/>
            <person name="Wang C."/>
            <person name="Feng Y."/>
            <person name="Wang J."/>
            <person name="Zheng F."/>
            <person name="Pan X."/>
            <person name="Liu D."/>
            <person name="Li M."/>
            <person name="Song Y."/>
            <person name="Zhu X."/>
            <person name="Sun H."/>
            <person name="Feng T."/>
            <person name="Guo Z."/>
            <person name="Ju A."/>
            <person name="Ge J."/>
            <person name="Dong Y."/>
            <person name="Sun W."/>
            <person name="Jiang Y."/>
            <person name="Wang J."/>
            <person name="Yan J."/>
            <person name="Yang H."/>
            <person name="Wang X."/>
            <person name="Gao G.F."/>
            <person name="Yang R."/>
            <person name="Wang J."/>
            <person name="Yu J."/>
        </authorList>
    </citation>
    <scope>NUCLEOTIDE SEQUENCE [LARGE SCALE GENOMIC DNA]</scope>
    <source>
        <strain>05ZYH33</strain>
    </source>
</reference>
<accession>A4VXR1</accession>
<evidence type="ECO:0000255" key="1">
    <source>
        <dbReference type="HAMAP-Rule" id="MF_01343"/>
    </source>
</evidence>
<evidence type="ECO:0000305" key="2"/>
<proteinExistence type="inferred from homology"/>
<dbReference type="EMBL" id="CP000407">
    <property type="protein sequence ID" value="ABP90900.1"/>
    <property type="molecule type" value="Genomic_DNA"/>
</dbReference>
<dbReference type="SMR" id="A4VXR1"/>
<dbReference type="STRING" id="391295.SSU05_1934"/>
<dbReference type="KEGG" id="ssu:SSU05_1934"/>
<dbReference type="eggNOG" id="COG0184">
    <property type="taxonomic scope" value="Bacteria"/>
</dbReference>
<dbReference type="HOGENOM" id="CLU_148518_0_0_9"/>
<dbReference type="GO" id="GO:0022627">
    <property type="term" value="C:cytosolic small ribosomal subunit"/>
    <property type="evidence" value="ECO:0007669"/>
    <property type="project" value="TreeGrafter"/>
</dbReference>
<dbReference type="GO" id="GO:0019843">
    <property type="term" value="F:rRNA binding"/>
    <property type="evidence" value="ECO:0007669"/>
    <property type="project" value="UniProtKB-UniRule"/>
</dbReference>
<dbReference type="GO" id="GO:0003735">
    <property type="term" value="F:structural constituent of ribosome"/>
    <property type="evidence" value="ECO:0007669"/>
    <property type="project" value="InterPro"/>
</dbReference>
<dbReference type="GO" id="GO:0006412">
    <property type="term" value="P:translation"/>
    <property type="evidence" value="ECO:0007669"/>
    <property type="project" value="UniProtKB-UniRule"/>
</dbReference>
<dbReference type="CDD" id="cd00353">
    <property type="entry name" value="Ribosomal_S15p_S13e"/>
    <property type="match status" value="1"/>
</dbReference>
<dbReference type="FunFam" id="1.10.287.10:FF:000002">
    <property type="entry name" value="30S ribosomal protein S15"/>
    <property type="match status" value="1"/>
</dbReference>
<dbReference type="Gene3D" id="6.10.250.3130">
    <property type="match status" value="1"/>
</dbReference>
<dbReference type="Gene3D" id="1.10.287.10">
    <property type="entry name" value="S15/NS1, RNA-binding"/>
    <property type="match status" value="1"/>
</dbReference>
<dbReference type="HAMAP" id="MF_01343_B">
    <property type="entry name" value="Ribosomal_uS15_B"/>
    <property type="match status" value="1"/>
</dbReference>
<dbReference type="InterPro" id="IPR000589">
    <property type="entry name" value="Ribosomal_uS15"/>
</dbReference>
<dbReference type="InterPro" id="IPR005290">
    <property type="entry name" value="Ribosomal_uS15_bac-type"/>
</dbReference>
<dbReference type="InterPro" id="IPR009068">
    <property type="entry name" value="uS15_NS1_RNA-bd_sf"/>
</dbReference>
<dbReference type="NCBIfam" id="TIGR00952">
    <property type="entry name" value="S15_bact"/>
    <property type="match status" value="1"/>
</dbReference>
<dbReference type="PANTHER" id="PTHR23321">
    <property type="entry name" value="RIBOSOMAL PROTEIN S15, BACTERIAL AND ORGANELLAR"/>
    <property type="match status" value="1"/>
</dbReference>
<dbReference type="PANTHER" id="PTHR23321:SF26">
    <property type="entry name" value="SMALL RIBOSOMAL SUBUNIT PROTEIN US15M"/>
    <property type="match status" value="1"/>
</dbReference>
<dbReference type="Pfam" id="PF00312">
    <property type="entry name" value="Ribosomal_S15"/>
    <property type="match status" value="1"/>
</dbReference>
<dbReference type="SMART" id="SM01387">
    <property type="entry name" value="Ribosomal_S15"/>
    <property type="match status" value="1"/>
</dbReference>
<dbReference type="SUPFAM" id="SSF47060">
    <property type="entry name" value="S15/NS1 RNA-binding domain"/>
    <property type="match status" value="1"/>
</dbReference>
<dbReference type="PROSITE" id="PS00362">
    <property type="entry name" value="RIBOSOMAL_S15"/>
    <property type="match status" value="1"/>
</dbReference>
<name>RS15_STRSY</name>
<protein>
    <recommendedName>
        <fullName evidence="1">Small ribosomal subunit protein uS15</fullName>
    </recommendedName>
    <alternativeName>
        <fullName evidence="2">30S ribosomal protein S15</fullName>
    </alternativeName>
</protein>
<gene>
    <name evidence="1" type="primary">rpsO</name>
    <name type="ordered locus">SSU05_1934</name>
</gene>
<keyword id="KW-0687">Ribonucleoprotein</keyword>
<keyword id="KW-0689">Ribosomal protein</keyword>
<keyword id="KW-0694">RNA-binding</keyword>
<keyword id="KW-0699">rRNA-binding</keyword>